<accession>Q4P209</accession>
<accession>A0A0D1CGL6</accession>
<feature type="chain" id="PRO_0000065823" description="Chromatin modification-related protein EAF1">
    <location>
        <begin position="1"/>
        <end position="1654"/>
    </location>
</feature>
<feature type="domain" description="HSA" evidence="3">
    <location>
        <begin position="536"/>
        <end position="611"/>
    </location>
</feature>
<feature type="domain" description="Myb-like" evidence="2">
    <location>
        <begin position="995"/>
        <end position="1048"/>
    </location>
</feature>
<feature type="region of interest" description="Disordered" evidence="4">
    <location>
        <begin position="1"/>
        <end position="66"/>
    </location>
</feature>
<feature type="region of interest" description="Disordered" evidence="4">
    <location>
        <begin position="204"/>
        <end position="229"/>
    </location>
</feature>
<feature type="region of interest" description="Disordered" evidence="4">
    <location>
        <begin position="609"/>
        <end position="679"/>
    </location>
</feature>
<feature type="region of interest" description="Disordered" evidence="4">
    <location>
        <begin position="693"/>
        <end position="720"/>
    </location>
</feature>
<feature type="region of interest" description="Disordered" evidence="4">
    <location>
        <begin position="883"/>
        <end position="902"/>
    </location>
</feature>
<feature type="region of interest" description="Disordered" evidence="4">
    <location>
        <begin position="974"/>
        <end position="993"/>
    </location>
</feature>
<feature type="region of interest" description="Disordered" evidence="4">
    <location>
        <begin position="1057"/>
        <end position="1159"/>
    </location>
</feature>
<feature type="region of interest" description="Disordered" evidence="4">
    <location>
        <begin position="1257"/>
        <end position="1304"/>
    </location>
</feature>
<feature type="region of interest" description="Disordered" evidence="4">
    <location>
        <begin position="1449"/>
        <end position="1523"/>
    </location>
</feature>
<feature type="region of interest" description="Disordered" evidence="4">
    <location>
        <begin position="1570"/>
        <end position="1654"/>
    </location>
</feature>
<feature type="compositionally biased region" description="Low complexity" evidence="4">
    <location>
        <begin position="7"/>
        <end position="26"/>
    </location>
</feature>
<feature type="compositionally biased region" description="Polar residues" evidence="4">
    <location>
        <begin position="27"/>
        <end position="48"/>
    </location>
</feature>
<feature type="compositionally biased region" description="Low complexity" evidence="4">
    <location>
        <begin position="49"/>
        <end position="64"/>
    </location>
</feature>
<feature type="compositionally biased region" description="Basic and acidic residues" evidence="4">
    <location>
        <begin position="613"/>
        <end position="623"/>
    </location>
</feature>
<feature type="compositionally biased region" description="Low complexity" evidence="4">
    <location>
        <begin position="628"/>
        <end position="639"/>
    </location>
</feature>
<feature type="compositionally biased region" description="Polar residues" evidence="4">
    <location>
        <begin position="693"/>
        <end position="702"/>
    </location>
</feature>
<feature type="compositionally biased region" description="Acidic residues" evidence="4">
    <location>
        <begin position="710"/>
        <end position="720"/>
    </location>
</feature>
<feature type="compositionally biased region" description="Low complexity" evidence="4">
    <location>
        <begin position="980"/>
        <end position="993"/>
    </location>
</feature>
<feature type="compositionally biased region" description="Pro residues" evidence="4">
    <location>
        <begin position="1061"/>
        <end position="1071"/>
    </location>
</feature>
<feature type="compositionally biased region" description="Basic and acidic residues" evidence="4">
    <location>
        <begin position="1075"/>
        <end position="1096"/>
    </location>
</feature>
<feature type="compositionally biased region" description="Basic residues" evidence="4">
    <location>
        <begin position="1097"/>
        <end position="1115"/>
    </location>
</feature>
<feature type="compositionally biased region" description="Low complexity" evidence="4">
    <location>
        <begin position="1133"/>
        <end position="1143"/>
    </location>
</feature>
<feature type="compositionally biased region" description="Low complexity" evidence="4">
    <location>
        <begin position="1449"/>
        <end position="1482"/>
    </location>
</feature>
<feature type="compositionally biased region" description="Low complexity" evidence="4">
    <location>
        <begin position="1500"/>
        <end position="1516"/>
    </location>
</feature>
<feature type="compositionally biased region" description="Low complexity" evidence="4">
    <location>
        <begin position="1570"/>
        <end position="1608"/>
    </location>
</feature>
<feature type="compositionally biased region" description="Low complexity" evidence="4">
    <location>
        <begin position="1615"/>
        <end position="1629"/>
    </location>
</feature>
<gene>
    <name type="primary">EAF1</name>
    <name type="synonym">VID21</name>
    <name type="ORF">UMAG_05854</name>
</gene>
<comment type="function">
    <text evidence="1">Component of the NuA4 histone acetyltransferase complex which is involved in transcriptional activation of selected genes principally by acetylation of nucleosomal histone H4 and H2A. The NuA4 complex is also involved in DNA repair (By similarity).</text>
</comment>
<comment type="subunit">
    <text evidence="1">Component of the NuA4 histone acetyltransferase complex.</text>
</comment>
<comment type="subcellular location">
    <subcellularLocation>
        <location evidence="5">Nucleus</location>
    </subcellularLocation>
</comment>
<comment type="similarity">
    <text evidence="5">Belongs to the EAF1 family.</text>
</comment>
<proteinExistence type="inferred from homology"/>
<dbReference type="EMBL" id="CM003159">
    <property type="protein sequence ID" value="KIS66113.1"/>
    <property type="molecule type" value="Genomic_DNA"/>
</dbReference>
<dbReference type="RefSeq" id="XP_011392216.1">
    <property type="nucleotide sequence ID" value="XM_011393914.1"/>
</dbReference>
<dbReference type="STRING" id="237631.Q4P209"/>
<dbReference type="EnsemblFungi" id="KIS66113">
    <property type="protein sequence ID" value="KIS66113"/>
    <property type="gene ID" value="UMAG_05854"/>
</dbReference>
<dbReference type="GeneID" id="23565630"/>
<dbReference type="KEGG" id="uma:UMAG_05854"/>
<dbReference type="VEuPathDB" id="FungiDB:UMAG_05854"/>
<dbReference type="eggNOG" id="ENOG502RGMX">
    <property type="taxonomic scope" value="Eukaryota"/>
</dbReference>
<dbReference type="HOGENOM" id="CLU_001948_0_0_1"/>
<dbReference type="InParanoid" id="Q4P209"/>
<dbReference type="OMA" id="CYERCKW"/>
<dbReference type="OrthoDB" id="5364245at2759"/>
<dbReference type="Proteomes" id="UP000000561">
    <property type="component" value="Chromosome 20"/>
</dbReference>
<dbReference type="GO" id="GO:0035267">
    <property type="term" value="C:NuA4 histone acetyltransferase complex"/>
    <property type="evidence" value="ECO:0007669"/>
    <property type="project" value="UniProtKB-ARBA"/>
</dbReference>
<dbReference type="GO" id="GO:0005634">
    <property type="term" value="C:nucleus"/>
    <property type="evidence" value="ECO:0007669"/>
    <property type="project" value="UniProtKB-SubCell"/>
</dbReference>
<dbReference type="GO" id="GO:0004672">
    <property type="term" value="F:protein kinase activity"/>
    <property type="evidence" value="ECO:0000318"/>
    <property type="project" value="GO_Central"/>
</dbReference>
<dbReference type="GO" id="GO:0006325">
    <property type="term" value="P:chromatin organization"/>
    <property type="evidence" value="ECO:0007669"/>
    <property type="project" value="UniProtKB-KW"/>
</dbReference>
<dbReference type="GO" id="GO:0006281">
    <property type="term" value="P:DNA repair"/>
    <property type="evidence" value="ECO:0007669"/>
    <property type="project" value="UniProtKB-KW"/>
</dbReference>
<dbReference type="CDD" id="cd00167">
    <property type="entry name" value="SANT"/>
    <property type="match status" value="1"/>
</dbReference>
<dbReference type="Gene3D" id="1.10.10.60">
    <property type="entry name" value="Homeodomain-like"/>
    <property type="match status" value="1"/>
</dbReference>
<dbReference type="InterPro" id="IPR009057">
    <property type="entry name" value="Homeodomain-like_sf"/>
</dbReference>
<dbReference type="InterPro" id="IPR014012">
    <property type="entry name" value="HSA_dom"/>
</dbReference>
<dbReference type="InterPro" id="IPR001005">
    <property type="entry name" value="SANT/Myb"/>
</dbReference>
<dbReference type="PANTHER" id="PTHR24417:SF7">
    <property type="entry name" value="CHROMATIN MODIFICATION-RELATED PROTEIN EAF1"/>
    <property type="match status" value="1"/>
</dbReference>
<dbReference type="PANTHER" id="PTHR24417">
    <property type="entry name" value="SERINE/THREONINE-PROTEIN KINASE LMTK1"/>
    <property type="match status" value="1"/>
</dbReference>
<dbReference type="Pfam" id="PF07529">
    <property type="entry name" value="HSA"/>
    <property type="match status" value="1"/>
</dbReference>
<dbReference type="Pfam" id="PF13921">
    <property type="entry name" value="Myb_DNA-bind_6"/>
    <property type="match status" value="1"/>
</dbReference>
<dbReference type="SMART" id="SM00573">
    <property type="entry name" value="HSA"/>
    <property type="match status" value="1"/>
</dbReference>
<dbReference type="SUPFAM" id="SSF46689">
    <property type="entry name" value="Homeodomain-like"/>
    <property type="match status" value="1"/>
</dbReference>
<dbReference type="PROSITE" id="PS51204">
    <property type="entry name" value="HSA"/>
    <property type="match status" value="1"/>
</dbReference>
<dbReference type="PROSITE" id="PS50090">
    <property type="entry name" value="MYB_LIKE"/>
    <property type="match status" value="1"/>
</dbReference>
<name>EAF11_MYCMD</name>
<organism>
    <name type="scientific">Mycosarcoma maydis</name>
    <name type="common">Corn smut fungus</name>
    <name type="synonym">Ustilago maydis</name>
    <dbReference type="NCBI Taxonomy" id="5270"/>
    <lineage>
        <taxon>Eukaryota</taxon>
        <taxon>Fungi</taxon>
        <taxon>Dikarya</taxon>
        <taxon>Basidiomycota</taxon>
        <taxon>Ustilaginomycotina</taxon>
        <taxon>Ustilaginomycetes</taxon>
        <taxon>Ustilaginales</taxon>
        <taxon>Ustilaginaceae</taxon>
        <taxon>Mycosarcoma</taxon>
    </lineage>
</organism>
<keyword id="KW-0010">Activator</keyword>
<keyword id="KW-0156">Chromatin regulator</keyword>
<keyword id="KW-0227">DNA damage</keyword>
<keyword id="KW-0234">DNA repair</keyword>
<keyword id="KW-0539">Nucleus</keyword>
<keyword id="KW-1185">Reference proteome</keyword>
<keyword id="KW-0804">Transcription</keyword>
<keyword id="KW-0805">Transcription regulation</keyword>
<sequence>MSTEPVSSLALPAPAILPTTPIPASTQQASSLVSDQIQEASTASQKSVTSITQPPIPSQQQPPQHITANHPASIAAAATVALSATLLNPNEWNALASTSMVTLDDLRSAFLEQRQQQLKDLERSHRESLREMIFMSENYDKEDVAGSPWKLGQSLQVAEDDAREHVKSFLDQHRLALDPKMSIKDHILEQPKLLRQRVSQELKTGPIELAPPPTPTSATAPSAGEAQRDRDLKREIEQNNLHRSQAVARAAAAVQAHAIAEGVAKIKPLTITAAESQGVRVAPLQPGQVPSFVIESTTPIAHIVASSDSSTAVLVASDAQKVDSHTTMSAAEAVTPAIKVESTDNIDASPSKASHALEKAVSPVPGLARNASTQSTSLRVPPSPMVVPTIPENITAPPLHPTLQVLAPNPLSVTYAASLRPLPPDPTRRITGAGLSGGAIHHRSGRKITSLSNHSNVNSYSSIAAAKIGPAGSGQADLYRWYVRARASPGAGMVGKADKCLMTSDWRVAFNEQRFVRAMARIEKLKAQGEWSFRQPKKQKGPVVRKAHWDHLLEEMKWLQTDFREERRWKMTVAFHLAHEVAAWHRARTPAERAQFCVHVQRSYRHRTISDNVEQHNTDKLSAKEVVSSSQPFQAAAASLDDVEMTHSTSSSHIQKDGEPATVKAESGQPVEDADVTMDGGADADEAVTQAVESALQTTNEAASARAEEMDADGEDDADTDANDVEAATAALVSGEPSKPPKVEVVREPLSQPQPMPTLADVSVPTTSSATPTVPASSTPTTAANDKLVHALRSQPKDADSTLTAEMPPQLLATLRAPIFSTSVTTTVVSPAALLDSLNPEAAAALLGIEVSDLANAADLLEPGSLSFSKMFPELPLYGGVSLPESNSKSDRRWDEGSLNQPPRLTHVTKLLDSRPLLVSTLEPSKNRANGRWLADSDWVVAAEQSDPLRGVTDGADTALPPMPGSLLFARKSNRAAKDASGPASTTPAEPASPDARAALFVWTPDEDNYLMTLAKQYHNNWALVADLFNSTRLNTATDKREAWDCYDRCKRIEQAAAEGKPPPGPPPMPAPAADADKDSKKGDGKDADASSSKRDKLSKKSGSKHDGSKRKQRRSNLMEVMRRSAKRREATKQAQQTQQTKKVNLNTHETHAQIKAGPAITPQSLSALKTERDQAALRQYYEQQRAQLAYQQQQQQQQRLLAQQAQAQRMAQQQGTAGTSAPAATAVTQAGKAGTAIVAGGTGGVGNVSLLPAGTPAASAGPAGQAQQKAATGQGTNQAIAQQTQQQQQQPQSQQTAQMQVQQPPAAAAAAQQQQQQQVQLQSQLQASQAAQMQNLYAQMQQQQQQQQRQQQQQLGQAAAGLAQVRPGVGALTQQQLATLTPQQQQQYHAQLAAATAAAQQQQLRSQMAAVAAAQGGQAGFQLPNAQAQAQAQAQAQFQLMQQQQQQQNVMQNQGRPAMAQQAQQAALQMYQQQQRQAQMRPPQPTQPFAARPNARPGTAASSQAKPQAAARSATPAPPMPATVQALQQQLAISLATSNLSAEQINGLAIQLYKQAQQQQQQQQQQQQQQQQQQQQQQQQQQQQQQQQQQQQQQQQQQQPQQPAPTQQRPPPQQLLNQAIQALAAQTQKNQQPAPTVHGVTGSPVRPPTPRPS</sequence>
<reference key="1">
    <citation type="journal article" date="2006" name="Nature">
        <title>Insights from the genome of the biotrophic fungal plant pathogen Ustilago maydis.</title>
        <authorList>
            <person name="Kaemper J."/>
            <person name="Kahmann R."/>
            <person name="Boelker M."/>
            <person name="Ma L.-J."/>
            <person name="Brefort T."/>
            <person name="Saville B.J."/>
            <person name="Banuett F."/>
            <person name="Kronstad J.W."/>
            <person name="Gold S.E."/>
            <person name="Mueller O."/>
            <person name="Perlin M.H."/>
            <person name="Woesten H.A.B."/>
            <person name="de Vries R."/>
            <person name="Ruiz-Herrera J."/>
            <person name="Reynaga-Pena C.G."/>
            <person name="Snetselaar K."/>
            <person name="McCann M."/>
            <person name="Perez-Martin J."/>
            <person name="Feldbruegge M."/>
            <person name="Basse C.W."/>
            <person name="Steinberg G."/>
            <person name="Ibeas J.I."/>
            <person name="Holloman W."/>
            <person name="Guzman P."/>
            <person name="Farman M.L."/>
            <person name="Stajich J.E."/>
            <person name="Sentandreu R."/>
            <person name="Gonzalez-Prieto J.M."/>
            <person name="Kennell J.C."/>
            <person name="Molina L."/>
            <person name="Schirawski J."/>
            <person name="Mendoza-Mendoza A."/>
            <person name="Greilinger D."/>
            <person name="Muench K."/>
            <person name="Roessel N."/>
            <person name="Scherer M."/>
            <person name="Vranes M."/>
            <person name="Ladendorf O."/>
            <person name="Vincon V."/>
            <person name="Fuchs U."/>
            <person name="Sandrock B."/>
            <person name="Meng S."/>
            <person name="Ho E.C.H."/>
            <person name="Cahill M.J."/>
            <person name="Boyce K.J."/>
            <person name="Klose J."/>
            <person name="Klosterman S.J."/>
            <person name="Deelstra H.J."/>
            <person name="Ortiz-Castellanos L."/>
            <person name="Li W."/>
            <person name="Sanchez-Alonso P."/>
            <person name="Schreier P.H."/>
            <person name="Haeuser-Hahn I."/>
            <person name="Vaupel M."/>
            <person name="Koopmann E."/>
            <person name="Friedrich G."/>
            <person name="Voss H."/>
            <person name="Schlueter T."/>
            <person name="Margolis J."/>
            <person name="Platt D."/>
            <person name="Swimmer C."/>
            <person name="Gnirke A."/>
            <person name="Chen F."/>
            <person name="Vysotskaia V."/>
            <person name="Mannhaupt G."/>
            <person name="Gueldener U."/>
            <person name="Muensterkoetter M."/>
            <person name="Haase D."/>
            <person name="Oesterheld M."/>
            <person name="Mewes H.-W."/>
            <person name="Mauceli E.W."/>
            <person name="DeCaprio D."/>
            <person name="Wade C.M."/>
            <person name="Butler J."/>
            <person name="Young S.K."/>
            <person name="Jaffe D.B."/>
            <person name="Calvo S.E."/>
            <person name="Nusbaum C."/>
            <person name="Galagan J.E."/>
            <person name="Birren B.W."/>
        </authorList>
    </citation>
    <scope>NUCLEOTIDE SEQUENCE [LARGE SCALE GENOMIC DNA]</scope>
    <source>
        <strain>DSM 14603 / FGSC 9021 / UM521</strain>
    </source>
</reference>
<reference key="2">
    <citation type="submission" date="2014-09" db="EMBL/GenBank/DDBJ databases">
        <authorList>
            <person name="Gueldener U."/>
            <person name="Muensterkoetter M."/>
            <person name="Walter M.C."/>
            <person name="Mannhaupt G."/>
            <person name="Kahmann R."/>
        </authorList>
    </citation>
    <scope>GENOME REANNOTATION</scope>
    <source>
        <strain>DSM 14603 / FGSC 9021 / UM521</strain>
    </source>
</reference>
<evidence type="ECO:0000250" key="1"/>
<evidence type="ECO:0000255" key="2">
    <source>
        <dbReference type="PROSITE-ProRule" id="PRU00133"/>
    </source>
</evidence>
<evidence type="ECO:0000255" key="3">
    <source>
        <dbReference type="PROSITE-ProRule" id="PRU00549"/>
    </source>
</evidence>
<evidence type="ECO:0000256" key="4">
    <source>
        <dbReference type="SAM" id="MobiDB-lite"/>
    </source>
</evidence>
<evidence type="ECO:0000305" key="5"/>
<protein>
    <recommendedName>
        <fullName>Chromatin modification-related protein EAF1</fullName>
    </recommendedName>
    <alternativeName>
        <fullName>ESA1-associated factor 1</fullName>
    </alternativeName>
    <alternativeName>
        <fullName>Vacuolar import and degradation protein 21</fullName>
    </alternativeName>
</protein>